<proteinExistence type="evidence at protein level"/>
<organism>
    <name type="scientific">Vaccinia virus (strain Western Reserve)</name>
    <name type="common">VACV</name>
    <name type="synonym">Vaccinia virus (strain WR)</name>
    <dbReference type="NCBI Taxonomy" id="10254"/>
    <lineage>
        <taxon>Viruses</taxon>
        <taxon>Varidnaviria</taxon>
        <taxon>Bamfordvirae</taxon>
        <taxon>Nucleocytoviricota</taxon>
        <taxon>Pokkesviricetes</taxon>
        <taxon>Chitovirales</taxon>
        <taxon>Poxviridae</taxon>
        <taxon>Chordopoxvirinae</taxon>
        <taxon>Orthopoxvirus</taxon>
        <taxon>Vaccinia virus</taxon>
    </lineage>
</organism>
<sequence>MDFFNKFSQGLAESSTPKSSIYYSEEKDPDTKKDEAIEIGLKSQESYYQRQLREQLARDNMTVASRQPIQPLQPTIHITPQPVPTATPAPILLPSSTVPTPKPRQQTNTSSDMSNLFDWLSEDTDAPASSLLPALTPSNAVQDIISKFNKDQKTTTPPSTQPSQTLPTTTCTQQSDGNISCTTPTVTPPQPPIVATVCTPTPTGGTVCTTAQQNPNPGAASQQNLDDMALKDLMSNVERDMHQLQAETNDLVTNVYDAREYTRRAIDQILQLVKGFERFQK</sequence>
<dbReference type="EMBL" id="M76473">
    <property type="status" value="NOT_ANNOTATED_CDS"/>
    <property type="molecule type" value="Genomic_DNA"/>
</dbReference>
<dbReference type="EMBL" id="AY243312">
    <property type="protein sequence ID" value="AAO89402.1"/>
    <property type="molecule type" value="Genomic_DNA"/>
</dbReference>
<dbReference type="PIR" id="A41806">
    <property type="entry name" value="QQVZA5"/>
</dbReference>
<dbReference type="RefSeq" id="YP_233005.1">
    <property type="nucleotide sequence ID" value="NC_006998.1"/>
</dbReference>
<dbReference type="PDB" id="8R5I">
    <property type="method" value="EM"/>
    <property type="resolution" value="9.70 A"/>
    <property type="chains" value="B/D/F=1-281"/>
</dbReference>
<dbReference type="PDBsum" id="8R5I"/>
<dbReference type="EMDB" id="EMD-18918"/>
<dbReference type="SMR" id="P29191"/>
<dbReference type="DIP" id="DIP-2173N"/>
<dbReference type="IntAct" id="P29191">
    <property type="interactions" value="1"/>
</dbReference>
<dbReference type="MINT" id="P29191"/>
<dbReference type="GeneID" id="3707521"/>
<dbReference type="KEGG" id="vg:3707521"/>
<dbReference type="Proteomes" id="UP000000344">
    <property type="component" value="Genome"/>
</dbReference>
<dbReference type="GO" id="GO:0044173">
    <property type="term" value="C:host cell endoplasmic reticulum-Golgi intermediate compartment membrane"/>
    <property type="evidence" value="ECO:0007669"/>
    <property type="project" value="UniProtKB-SubCell"/>
</dbReference>
<dbReference type="GO" id="GO:0016020">
    <property type="term" value="C:membrane"/>
    <property type="evidence" value="ECO:0007669"/>
    <property type="project" value="UniProtKB-KW"/>
</dbReference>
<dbReference type="GO" id="GO:0044423">
    <property type="term" value="C:virion component"/>
    <property type="evidence" value="ECO:0007669"/>
    <property type="project" value="UniProtKB-KW"/>
</dbReference>
<dbReference type="InterPro" id="IPR010396">
    <property type="entry name" value="Poxvirus_A4L"/>
</dbReference>
<dbReference type="Pfam" id="PF06193">
    <property type="entry name" value="Orthopox_A5L"/>
    <property type="match status" value="1"/>
</dbReference>
<keyword id="KW-0002">3D-structure</keyword>
<keyword id="KW-1043">Host membrane</keyword>
<keyword id="KW-0426">Late protein</keyword>
<keyword id="KW-0472">Membrane</keyword>
<keyword id="KW-1185">Reference proteome</keyword>
<keyword id="KW-0946">Virion</keyword>
<name>PG130_VACCW</name>
<protein>
    <recommendedName>
        <fullName>39kDa core protein OPG130</fullName>
        <shortName>p39</shortName>
    </recommendedName>
    <alternativeName>
        <fullName>Protein A4</fullName>
    </alternativeName>
</protein>
<reference key="1">
    <citation type="journal article" date="1992" name="J. Virol.">
        <title>Identification and expression of rpo19, a vaccinia virus gene encoding a 19-kilodalton DNA-dependent RNA polymerase subunit.</title>
        <authorList>
            <person name="Ahn B.-Y."/>
            <person name="Rosel J."/>
            <person name="Cole N.B."/>
            <person name="Moss B."/>
        </authorList>
    </citation>
    <scope>NUCLEOTIDE SEQUENCE [GENOMIC DNA]</scope>
</reference>
<reference key="2">
    <citation type="submission" date="2003-02" db="EMBL/GenBank/DDBJ databases">
        <title>Sequencing of the coding region of Vaccinia-WR to an average 9-fold redundancy and an error rate of 0.16/10kb.</title>
        <authorList>
            <person name="Esposito J.J."/>
            <person name="Frace A.M."/>
            <person name="Sammons S.A."/>
            <person name="Olsen-Rasmussen M."/>
            <person name="Osborne J."/>
            <person name="Wohlhueter R."/>
        </authorList>
    </citation>
    <scope>NUCLEOTIDE SEQUENCE [LARGE SCALE GENOMIC DNA]</scope>
</reference>
<reference key="3">
    <citation type="journal article" date="1987" name="J. Virol.">
        <title>Structural and functional studies of a 39,000-Mr immunodominant protein of vaccinia virus.</title>
        <authorList>
            <person name="Maa J.S."/>
            <person name="Esteban M."/>
        </authorList>
    </citation>
    <scope>INDUCTION</scope>
</reference>
<reference key="4">
    <citation type="journal article" date="1999" name="Virology">
        <title>The vaccinia virus 39-kDa protein forms a stable complex with the p4a/4a major core protein early in morphogenesis.</title>
        <authorList>
            <person name="Risco C."/>
            <person name="Rodriguez J.R."/>
            <person name="Demkowicz W."/>
            <person name="Heljasvaara R."/>
            <person name="Carrascosa J.L."/>
            <person name="Esteban M."/>
            <person name="Rodriguez D."/>
        </authorList>
    </citation>
    <scope>INTERACTION WITH P4A/A10</scope>
    <scope>SUBCELLULAR LOCATION</scope>
    <scope>FUNCTION</scope>
</reference>
<reference key="5">
    <citation type="journal article" date="2002" name="J. Virol.">
        <title>Endoplasmic reticulum-Golgi intermediate compartment membranes and vimentin filaments participate in vaccinia virus assembly.</title>
        <authorList>
            <person name="Risco C."/>
            <person name="Rodriguez J.R."/>
            <person name="Lopez-Iglesias C."/>
            <person name="Carrascosa J.L."/>
            <person name="Esteban M."/>
            <person name="Rodriguez D."/>
        </authorList>
    </citation>
    <scope>SUBCELLULAR LOCATION</scope>
    <scope>FUNCTION</scope>
</reference>
<organismHost>
    <name type="scientific">Bos taurus</name>
    <name type="common">Bovine</name>
    <dbReference type="NCBI Taxonomy" id="9913"/>
</organismHost>
<comment type="function">
    <text evidence="2 3">Component of the virion core. Participates in virion assembly.</text>
</comment>
<comment type="subunit">
    <text evidence="2">Interacts with OPG136 and its cleaved form.</text>
</comment>
<comment type="subcellular location">
    <subcellularLocation>
        <location evidence="2">Virion</location>
    </subcellularLocation>
    <subcellularLocation>
        <location evidence="3">Host endoplasmic reticulum-Golgi intermediate compartment membrane</location>
    </subcellularLocation>
    <text>Localizes between the core and the membrane; might surround the outer core wall like a palisade (spikes).</text>
</comment>
<comment type="induction">
    <text evidence="4">Expressed in the late phase of the viral replicative cycle.</text>
</comment>
<comment type="PTM">
    <text evidence="5">Its phosphorylation state is regulated by the OPG054 kinase and the OPG106 phosphatase.</text>
</comment>
<comment type="similarity">
    <text evidence="5">Belongs to the orthopoxvirus OPG130 family.</text>
</comment>
<accession>P29191</accession>
<accession>Q76ZQ9</accession>
<evidence type="ECO:0000256" key="1">
    <source>
        <dbReference type="SAM" id="MobiDB-lite"/>
    </source>
</evidence>
<evidence type="ECO:0000269" key="2">
    <source>
    </source>
</evidence>
<evidence type="ECO:0000269" key="3">
    <source>
    </source>
</evidence>
<evidence type="ECO:0000269" key="4">
    <source>
    </source>
</evidence>
<evidence type="ECO:0000305" key="5"/>
<gene>
    <name type="primary">OPG130</name>
    <name type="ordered locus">VACWR123</name>
    <name type="ORF">A4L</name>
</gene>
<feature type="chain" id="PRO_0000099219" description="39kDa core protein OPG130">
    <location>
        <begin position="1"/>
        <end position="281"/>
    </location>
</feature>
<feature type="region of interest" description="Disordered" evidence="1">
    <location>
        <begin position="1"/>
        <end position="33"/>
    </location>
</feature>
<feature type="region of interest" description="Disordered" evidence="1">
    <location>
        <begin position="93"/>
        <end position="112"/>
    </location>
</feature>
<feature type="region of interest" description="Disordered" evidence="1">
    <location>
        <begin position="149"/>
        <end position="188"/>
    </location>
</feature>
<feature type="compositionally biased region" description="Polar residues" evidence="1">
    <location>
        <begin position="1"/>
        <end position="22"/>
    </location>
</feature>
<feature type="compositionally biased region" description="Basic and acidic residues" evidence="1">
    <location>
        <begin position="24"/>
        <end position="33"/>
    </location>
</feature>
<feature type="compositionally biased region" description="Polar residues" evidence="1">
    <location>
        <begin position="94"/>
        <end position="112"/>
    </location>
</feature>
<feature type="compositionally biased region" description="Low complexity" evidence="1">
    <location>
        <begin position="154"/>
        <end position="175"/>
    </location>
</feature>